<proteinExistence type="inferred from homology"/>
<name>AROE_CHLTE</name>
<protein>
    <recommendedName>
        <fullName evidence="1">Shikimate dehydrogenase (NADP(+))</fullName>
        <shortName evidence="1">SDH</shortName>
        <ecNumber evidence="1">1.1.1.25</ecNumber>
    </recommendedName>
</protein>
<gene>
    <name evidence="1" type="primary">aroE</name>
    <name type="ordered locus">CT1809</name>
</gene>
<feature type="chain" id="PRO_0000135999" description="Shikimate dehydrogenase (NADP(+))">
    <location>
        <begin position="1"/>
        <end position="295"/>
    </location>
</feature>
<feature type="active site" description="Proton acceptor" evidence="1">
    <location>
        <position position="72"/>
    </location>
</feature>
<feature type="binding site" evidence="1">
    <location>
        <begin position="20"/>
        <end position="22"/>
    </location>
    <ligand>
        <name>shikimate</name>
        <dbReference type="ChEBI" id="CHEBI:36208"/>
    </ligand>
</feature>
<feature type="binding site" evidence="1">
    <location>
        <position position="68"/>
    </location>
    <ligand>
        <name>shikimate</name>
        <dbReference type="ChEBI" id="CHEBI:36208"/>
    </ligand>
</feature>
<feature type="binding site" evidence="1">
    <location>
        <position position="93"/>
    </location>
    <ligand>
        <name>shikimate</name>
        <dbReference type="ChEBI" id="CHEBI:36208"/>
    </ligand>
</feature>
<feature type="binding site" evidence="1">
    <location>
        <position position="108"/>
    </location>
    <ligand>
        <name>shikimate</name>
        <dbReference type="ChEBI" id="CHEBI:36208"/>
    </ligand>
</feature>
<feature type="binding site" evidence="1">
    <location>
        <begin position="132"/>
        <end position="136"/>
    </location>
    <ligand>
        <name>NADP(+)</name>
        <dbReference type="ChEBI" id="CHEBI:58349"/>
    </ligand>
</feature>
<feature type="binding site" evidence="1">
    <location>
        <position position="234"/>
    </location>
    <ligand>
        <name>NADP(+)</name>
        <dbReference type="ChEBI" id="CHEBI:58349"/>
    </ligand>
</feature>
<feature type="binding site" evidence="1">
    <location>
        <position position="236"/>
    </location>
    <ligand>
        <name>shikimate</name>
        <dbReference type="ChEBI" id="CHEBI:36208"/>
    </ligand>
</feature>
<feature type="binding site" evidence="1">
    <location>
        <position position="257"/>
    </location>
    <ligand>
        <name>NADP(+)</name>
        <dbReference type="ChEBI" id="CHEBI:58349"/>
    </ligand>
</feature>
<sequence>MSNSQSKKIFGLIGKHVDYSWSPLIHNTGFEALGLPCVYTIFNIPSPEMIGDALKGSRALGIAGFSVTIPYKKTVVPFLDELSPEALSIGAVNTIVNDNGRLLGYNTDIDGFAAPLLPMAESIRNRPVCIFGNGGAALAAVEAFRLRFNPSSVLLVVRDTQKAEDMLEEYAYRDLVTIHAGREIDQPACSKLIRDCRVLVNATPVGTAGRNDHIHSILPTGHGLLHDGQIVYDMVYNPPETPLLAEARAAGATVIAGIEMLIAQAARAFSIWTGQELPVDLVRKTVLAAIEKSEG</sequence>
<comment type="function">
    <text evidence="1">Involved in the biosynthesis of the chorismate, which leads to the biosynthesis of aromatic amino acids. Catalyzes the reversible NADPH linked reduction of 3-dehydroshikimate (DHSA) to yield shikimate (SA).</text>
</comment>
<comment type="catalytic activity">
    <reaction evidence="1">
        <text>shikimate + NADP(+) = 3-dehydroshikimate + NADPH + H(+)</text>
        <dbReference type="Rhea" id="RHEA:17737"/>
        <dbReference type="ChEBI" id="CHEBI:15378"/>
        <dbReference type="ChEBI" id="CHEBI:16630"/>
        <dbReference type="ChEBI" id="CHEBI:36208"/>
        <dbReference type="ChEBI" id="CHEBI:57783"/>
        <dbReference type="ChEBI" id="CHEBI:58349"/>
        <dbReference type="EC" id="1.1.1.25"/>
    </reaction>
</comment>
<comment type="pathway">
    <text evidence="1">Metabolic intermediate biosynthesis; chorismate biosynthesis; chorismate from D-erythrose 4-phosphate and phosphoenolpyruvate: step 4/7.</text>
</comment>
<comment type="subunit">
    <text evidence="1">Homodimer.</text>
</comment>
<comment type="similarity">
    <text evidence="1">Belongs to the shikimate dehydrogenase family.</text>
</comment>
<dbReference type="EC" id="1.1.1.25" evidence="1"/>
<dbReference type="EMBL" id="AE006470">
    <property type="protein sequence ID" value="AAM73030.1"/>
    <property type="molecule type" value="Genomic_DNA"/>
</dbReference>
<dbReference type="RefSeq" id="NP_662688.1">
    <property type="nucleotide sequence ID" value="NC_002932.3"/>
</dbReference>
<dbReference type="RefSeq" id="WP_010933469.1">
    <property type="nucleotide sequence ID" value="NC_002932.3"/>
</dbReference>
<dbReference type="SMR" id="Q8KBH8"/>
<dbReference type="STRING" id="194439.CT1809"/>
<dbReference type="EnsemblBacteria" id="AAM73030">
    <property type="protein sequence ID" value="AAM73030"/>
    <property type="gene ID" value="CT1809"/>
</dbReference>
<dbReference type="KEGG" id="cte:CT1809"/>
<dbReference type="PATRIC" id="fig|194439.7.peg.1642"/>
<dbReference type="eggNOG" id="COG0169">
    <property type="taxonomic scope" value="Bacteria"/>
</dbReference>
<dbReference type="HOGENOM" id="CLU_044063_4_1_10"/>
<dbReference type="OrthoDB" id="9792692at2"/>
<dbReference type="UniPathway" id="UPA00053">
    <property type="reaction ID" value="UER00087"/>
</dbReference>
<dbReference type="Proteomes" id="UP000001007">
    <property type="component" value="Chromosome"/>
</dbReference>
<dbReference type="GO" id="GO:0050661">
    <property type="term" value="F:NADP binding"/>
    <property type="evidence" value="ECO:0007669"/>
    <property type="project" value="InterPro"/>
</dbReference>
<dbReference type="GO" id="GO:0004764">
    <property type="term" value="F:shikimate 3-dehydrogenase (NADP+) activity"/>
    <property type="evidence" value="ECO:0007669"/>
    <property type="project" value="UniProtKB-UniRule"/>
</dbReference>
<dbReference type="GO" id="GO:0008652">
    <property type="term" value="P:amino acid biosynthetic process"/>
    <property type="evidence" value="ECO:0007669"/>
    <property type="project" value="UniProtKB-KW"/>
</dbReference>
<dbReference type="GO" id="GO:0009073">
    <property type="term" value="P:aromatic amino acid family biosynthetic process"/>
    <property type="evidence" value="ECO:0007669"/>
    <property type="project" value="UniProtKB-KW"/>
</dbReference>
<dbReference type="GO" id="GO:0009423">
    <property type="term" value="P:chorismate biosynthetic process"/>
    <property type="evidence" value="ECO:0007669"/>
    <property type="project" value="UniProtKB-UniRule"/>
</dbReference>
<dbReference type="GO" id="GO:0019632">
    <property type="term" value="P:shikimate metabolic process"/>
    <property type="evidence" value="ECO:0007669"/>
    <property type="project" value="InterPro"/>
</dbReference>
<dbReference type="CDD" id="cd01065">
    <property type="entry name" value="NAD_bind_Shikimate_DH"/>
    <property type="match status" value="1"/>
</dbReference>
<dbReference type="Gene3D" id="3.40.50.10860">
    <property type="entry name" value="Leucine Dehydrogenase, chain A, domain 1"/>
    <property type="match status" value="1"/>
</dbReference>
<dbReference type="Gene3D" id="3.40.50.720">
    <property type="entry name" value="NAD(P)-binding Rossmann-like Domain"/>
    <property type="match status" value="1"/>
</dbReference>
<dbReference type="HAMAP" id="MF_00222">
    <property type="entry name" value="Shikimate_DH_AroE"/>
    <property type="match status" value="1"/>
</dbReference>
<dbReference type="InterPro" id="IPR046346">
    <property type="entry name" value="Aminoacid_DH-like_N_sf"/>
</dbReference>
<dbReference type="InterPro" id="IPR036291">
    <property type="entry name" value="NAD(P)-bd_dom_sf"/>
</dbReference>
<dbReference type="InterPro" id="IPR041121">
    <property type="entry name" value="SDH_C"/>
</dbReference>
<dbReference type="InterPro" id="IPR011342">
    <property type="entry name" value="Shikimate_DH"/>
</dbReference>
<dbReference type="InterPro" id="IPR013708">
    <property type="entry name" value="Shikimate_DH-bd_N"/>
</dbReference>
<dbReference type="InterPro" id="IPR022893">
    <property type="entry name" value="Shikimate_DH_fam"/>
</dbReference>
<dbReference type="NCBIfam" id="TIGR00507">
    <property type="entry name" value="aroE"/>
    <property type="match status" value="1"/>
</dbReference>
<dbReference type="PANTHER" id="PTHR21089:SF1">
    <property type="entry name" value="BIFUNCTIONAL 3-DEHYDROQUINATE DEHYDRATASE_SHIKIMATE DEHYDROGENASE, CHLOROPLASTIC"/>
    <property type="match status" value="1"/>
</dbReference>
<dbReference type="PANTHER" id="PTHR21089">
    <property type="entry name" value="SHIKIMATE DEHYDROGENASE"/>
    <property type="match status" value="1"/>
</dbReference>
<dbReference type="Pfam" id="PF18317">
    <property type="entry name" value="SDH_C"/>
    <property type="match status" value="1"/>
</dbReference>
<dbReference type="Pfam" id="PF08501">
    <property type="entry name" value="Shikimate_dh_N"/>
    <property type="match status" value="1"/>
</dbReference>
<dbReference type="SUPFAM" id="SSF53223">
    <property type="entry name" value="Aminoacid dehydrogenase-like, N-terminal domain"/>
    <property type="match status" value="1"/>
</dbReference>
<dbReference type="SUPFAM" id="SSF51735">
    <property type="entry name" value="NAD(P)-binding Rossmann-fold domains"/>
    <property type="match status" value="1"/>
</dbReference>
<reference key="1">
    <citation type="journal article" date="2002" name="Proc. Natl. Acad. Sci. U.S.A.">
        <title>The complete genome sequence of Chlorobium tepidum TLS, a photosynthetic, anaerobic, green-sulfur bacterium.</title>
        <authorList>
            <person name="Eisen J.A."/>
            <person name="Nelson K.E."/>
            <person name="Paulsen I.T."/>
            <person name="Heidelberg J.F."/>
            <person name="Wu M."/>
            <person name="Dodson R.J."/>
            <person name="DeBoy R.T."/>
            <person name="Gwinn M.L."/>
            <person name="Nelson W.C."/>
            <person name="Haft D.H."/>
            <person name="Hickey E.K."/>
            <person name="Peterson J.D."/>
            <person name="Durkin A.S."/>
            <person name="Kolonay J.F."/>
            <person name="Yang F."/>
            <person name="Holt I.E."/>
            <person name="Umayam L.A."/>
            <person name="Mason T.M."/>
            <person name="Brenner M."/>
            <person name="Shea T.P."/>
            <person name="Parksey D.S."/>
            <person name="Nierman W.C."/>
            <person name="Feldblyum T.V."/>
            <person name="Hansen C.L."/>
            <person name="Craven M.B."/>
            <person name="Radune D."/>
            <person name="Vamathevan J.J."/>
            <person name="Khouri H.M."/>
            <person name="White O."/>
            <person name="Gruber T.M."/>
            <person name="Ketchum K.A."/>
            <person name="Venter J.C."/>
            <person name="Tettelin H."/>
            <person name="Bryant D.A."/>
            <person name="Fraser C.M."/>
        </authorList>
    </citation>
    <scope>NUCLEOTIDE SEQUENCE [LARGE SCALE GENOMIC DNA]</scope>
    <source>
        <strain>ATCC 49652 / DSM 12025 / NBRC 103806 / TLS</strain>
    </source>
</reference>
<organism>
    <name type="scientific">Chlorobaculum tepidum (strain ATCC 49652 / DSM 12025 / NBRC 103806 / TLS)</name>
    <name type="common">Chlorobium tepidum</name>
    <dbReference type="NCBI Taxonomy" id="194439"/>
    <lineage>
        <taxon>Bacteria</taxon>
        <taxon>Pseudomonadati</taxon>
        <taxon>Chlorobiota</taxon>
        <taxon>Chlorobiia</taxon>
        <taxon>Chlorobiales</taxon>
        <taxon>Chlorobiaceae</taxon>
        <taxon>Chlorobaculum</taxon>
    </lineage>
</organism>
<keyword id="KW-0028">Amino-acid biosynthesis</keyword>
<keyword id="KW-0057">Aromatic amino acid biosynthesis</keyword>
<keyword id="KW-0521">NADP</keyword>
<keyword id="KW-0560">Oxidoreductase</keyword>
<keyword id="KW-1185">Reference proteome</keyword>
<evidence type="ECO:0000255" key="1">
    <source>
        <dbReference type="HAMAP-Rule" id="MF_00222"/>
    </source>
</evidence>
<accession>Q8KBH8</accession>